<gene>
    <name type="primary">LHCB1.2</name>
    <name type="synonym">AB180</name>
    <name type="synonym">CAB3</name>
    <name type="synonym">LHCP-A</name>
    <name type="ordered locus">At1g29910</name>
    <name type="ORF">F1N18.5</name>
</gene>
<reference key="1">
    <citation type="journal article" date="1986" name="Nucleic Acids Res.">
        <title>Structure and expression of three light-harvesting chlorophyll a/b-binding protein genes in Arabidopsis thaliana.</title>
        <authorList>
            <person name="Leutwiler L.S."/>
            <person name="Meyerowitz E.M."/>
            <person name="Tobin E.M."/>
        </authorList>
    </citation>
    <scope>NUCLEOTIDE SEQUENCE [GENOMIC DNA]</scope>
    <source>
        <strain>cv. Columbia</strain>
    </source>
</reference>
<reference key="2">
    <citation type="journal article" date="2000" name="Nature">
        <title>Sequence and analysis of chromosome 1 of the plant Arabidopsis thaliana.</title>
        <authorList>
            <person name="Theologis A."/>
            <person name="Ecker J.R."/>
            <person name="Palm C.J."/>
            <person name="Federspiel N.A."/>
            <person name="Kaul S."/>
            <person name="White O."/>
            <person name="Alonso J."/>
            <person name="Altafi H."/>
            <person name="Araujo R."/>
            <person name="Bowman C.L."/>
            <person name="Brooks S.Y."/>
            <person name="Buehler E."/>
            <person name="Chan A."/>
            <person name="Chao Q."/>
            <person name="Chen H."/>
            <person name="Cheuk R.F."/>
            <person name="Chin C.W."/>
            <person name="Chung M.K."/>
            <person name="Conn L."/>
            <person name="Conway A.B."/>
            <person name="Conway A.R."/>
            <person name="Creasy T.H."/>
            <person name="Dewar K."/>
            <person name="Dunn P."/>
            <person name="Etgu P."/>
            <person name="Feldblyum T.V."/>
            <person name="Feng J.-D."/>
            <person name="Fong B."/>
            <person name="Fujii C.Y."/>
            <person name="Gill J.E."/>
            <person name="Goldsmith A.D."/>
            <person name="Haas B."/>
            <person name="Hansen N.F."/>
            <person name="Hughes B."/>
            <person name="Huizar L."/>
            <person name="Hunter J.L."/>
            <person name="Jenkins J."/>
            <person name="Johnson-Hopson C."/>
            <person name="Khan S."/>
            <person name="Khaykin E."/>
            <person name="Kim C.J."/>
            <person name="Koo H.L."/>
            <person name="Kremenetskaia I."/>
            <person name="Kurtz D.B."/>
            <person name="Kwan A."/>
            <person name="Lam B."/>
            <person name="Langin-Hooper S."/>
            <person name="Lee A."/>
            <person name="Lee J.M."/>
            <person name="Lenz C.A."/>
            <person name="Li J.H."/>
            <person name="Li Y.-P."/>
            <person name="Lin X."/>
            <person name="Liu S.X."/>
            <person name="Liu Z.A."/>
            <person name="Luros J.S."/>
            <person name="Maiti R."/>
            <person name="Marziali A."/>
            <person name="Militscher J."/>
            <person name="Miranda M."/>
            <person name="Nguyen M."/>
            <person name="Nierman W.C."/>
            <person name="Osborne B.I."/>
            <person name="Pai G."/>
            <person name="Peterson J."/>
            <person name="Pham P.K."/>
            <person name="Rizzo M."/>
            <person name="Rooney T."/>
            <person name="Rowley D."/>
            <person name="Sakano H."/>
            <person name="Salzberg S.L."/>
            <person name="Schwartz J.R."/>
            <person name="Shinn P."/>
            <person name="Southwick A.M."/>
            <person name="Sun H."/>
            <person name="Tallon L.J."/>
            <person name="Tambunga G."/>
            <person name="Toriumi M.J."/>
            <person name="Town C.D."/>
            <person name="Utterback T."/>
            <person name="Van Aken S."/>
            <person name="Vaysberg M."/>
            <person name="Vysotskaia V.S."/>
            <person name="Walker M."/>
            <person name="Wu D."/>
            <person name="Yu G."/>
            <person name="Fraser C.M."/>
            <person name="Venter J.C."/>
            <person name="Davis R.W."/>
        </authorList>
    </citation>
    <scope>NUCLEOTIDE SEQUENCE [LARGE SCALE GENOMIC DNA]</scope>
    <source>
        <strain>cv. Columbia</strain>
    </source>
</reference>
<reference key="3">
    <citation type="journal article" date="2017" name="Plant J.">
        <title>Araport11: a complete reannotation of the Arabidopsis thaliana reference genome.</title>
        <authorList>
            <person name="Cheng C.Y."/>
            <person name="Krishnakumar V."/>
            <person name="Chan A.P."/>
            <person name="Thibaud-Nissen F."/>
            <person name="Schobel S."/>
            <person name="Town C.D."/>
        </authorList>
    </citation>
    <scope>GENOME REANNOTATION</scope>
    <source>
        <strain>cv. Columbia</strain>
    </source>
</reference>
<reference key="4">
    <citation type="journal article" date="2003" name="Science">
        <title>Empirical analysis of transcriptional activity in the Arabidopsis genome.</title>
        <authorList>
            <person name="Yamada K."/>
            <person name="Lim J."/>
            <person name="Dale J.M."/>
            <person name="Chen H."/>
            <person name="Shinn P."/>
            <person name="Palm C.J."/>
            <person name="Southwick A.M."/>
            <person name="Wu H.C."/>
            <person name="Kim C.J."/>
            <person name="Nguyen M."/>
            <person name="Pham P.K."/>
            <person name="Cheuk R.F."/>
            <person name="Karlin-Newmann G."/>
            <person name="Liu S.X."/>
            <person name="Lam B."/>
            <person name="Sakano H."/>
            <person name="Wu T."/>
            <person name="Yu G."/>
            <person name="Miranda M."/>
            <person name="Quach H.L."/>
            <person name="Tripp M."/>
            <person name="Chang C.H."/>
            <person name="Lee J.M."/>
            <person name="Toriumi M.J."/>
            <person name="Chan M.M."/>
            <person name="Tang C.C."/>
            <person name="Onodera C.S."/>
            <person name="Deng J.M."/>
            <person name="Akiyama K."/>
            <person name="Ansari Y."/>
            <person name="Arakawa T."/>
            <person name="Banh J."/>
            <person name="Banno F."/>
            <person name="Bowser L."/>
            <person name="Brooks S.Y."/>
            <person name="Carninci P."/>
            <person name="Chao Q."/>
            <person name="Choy N."/>
            <person name="Enju A."/>
            <person name="Goldsmith A.D."/>
            <person name="Gurjal M."/>
            <person name="Hansen N.F."/>
            <person name="Hayashizaki Y."/>
            <person name="Johnson-Hopson C."/>
            <person name="Hsuan V.W."/>
            <person name="Iida K."/>
            <person name="Karnes M."/>
            <person name="Khan S."/>
            <person name="Koesema E."/>
            <person name="Ishida J."/>
            <person name="Jiang P.X."/>
            <person name="Jones T."/>
            <person name="Kawai J."/>
            <person name="Kamiya A."/>
            <person name="Meyers C."/>
            <person name="Nakajima M."/>
            <person name="Narusaka M."/>
            <person name="Seki M."/>
            <person name="Sakurai T."/>
            <person name="Satou M."/>
            <person name="Tamse R."/>
            <person name="Vaysberg M."/>
            <person name="Wallender E.K."/>
            <person name="Wong C."/>
            <person name="Yamamura Y."/>
            <person name="Yuan S."/>
            <person name="Shinozaki K."/>
            <person name="Davis R.W."/>
            <person name="Theologis A."/>
            <person name="Ecker J.R."/>
        </authorList>
    </citation>
    <scope>NUCLEOTIDE SEQUENCE [LARGE SCALE MRNA]</scope>
    <source>
        <strain>cv. Columbia</strain>
    </source>
</reference>
<reference key="5">
    <citation type="journal article" date="2001" name="J. Biol. Chem.">
        <title>Mass spectrometric resolution of reversible protein phosphorylation in photosynthetic membranes of Arabidopsis thaliana.</title>
        <authorList>
            <person name="Vener A.V."/>
            <person name="Harms A."/>
            <person name="Sussman M.R."/>
            <person name="Vierstra R.D."/>
        </authorList>
    </citation>
    <scope>PROTEIN SEQUENCE OF 36-43</scope>
    <scope>IDENTIFICATION BY MASS SPECTROMETRY</scope>
    <scope>PHOSPHORYLATION AT THR-38</scope>
    <scope>ACETYLATION AT ARG-36</scope>
    <source>
        <strain>cv. Columbia</strain>
    </source>
</reference>
<reference key="6">
    <citation type="journal article" date="2009" name="Plant Physiol.">
        <title>Large-scale Arabidopsis phosphoproteome profiling reveals novel chloroplast kinase substrates and phosphorylation networks.</title>
        <authorList>
            <person name="Reiland S."/>
            <person name="Messerli G."/>
            <person name="Baerenfaller K."/>
            <person name="Gerrits B."/>
            <person name="Endler A."/>
            <person name="Grossmann J."/>
            <person name="Gruissem W."/>
            <person name="Baginsky S."/>
        </authorList>
    </citation>
    <scope>IDENTIFICATION BY MASS SPECTROMETRY [LARGE SCALE ANALYSIS]</scope>
</reference>
<comment type="function">
    <text>The light-harvesting complex (LHC) functions as a light receptor, it captures and delivers excitation energy to photosystems with which it is closely associated.</text>
</comment>
<comment type="cofactor">
    <text evidence="1">Binds at least 14 chlorophylls (8 Chl-a and 6 Chl-b) and carotenoids such as lutein and neoxanthin.</text>
</comment>
<comment type="subunit">
    <text>The LHC complex consists of chlorophyll a-b binding proteins.</text>
</comment>
<comment type="subcellular location">
    <subcellularLocation>
        <location>Plastid</location>
        <location>Chloroplast thylakoid membrane</location>
        <topology>Multi-pass membrane protein</topology>
    </subcellularLocation>
</comment>
<comment type="domain">
    <text>The N-terminus of the protein extends into the stroma where it is involved with adhesion of granal membranes and post-translational modifications; both are believed to mediate the distribution of excitation energy between photosystems I and II.</text>
</comment>
<comment type="PTM">
    <text evidence="1">Photoregulated by reversible phosphorylation of its threonine residues.</text>
</comment>
<comment type="similarity">
    <text evidence="6">Belongs to the light-harvesting chlorophyll a/b-binding (LHC) protein family.</text>
</comment>
<dbReference type="EMBL" id="X03908">
    <property type="protein sequence ID" value="CAA27541.1"/>
    <property type="molecule type" value="Genomic_DNA"/>
</dbReference>
<dbReference type="EMBL" id="X03908">
    <property type="protein sequence ID" value="CAA27542.1"/>
    <property type="molecule type" value="Genomic_DNA"/>
</dbReference>
<dbReference type="EMBL" id="AC008030">
    <property type="protein sequence ID" value="AAG10605.1"/>
    <property type="molecule type" value="Genomic_DNA"/>
</dbReference>
<dbReference type="EMBL" id="CP002684">
    <property type="protein sequence ID" value="AEE31149.1"/>
    <property type="molecule type" value="Genomic_DNA"/>
</dbReference>
<dbReference type="EMBL" id="AY065165">
    <property type="protein sequence ID" value="AAL38341.1"/>
    <property type="molecule type" value="mRNA"/>
</dbReference>
<dbReference type="EMBL" id="AY114594">
    <property type="protein sequence ID" value="AAM47913.1"/>
    <property type="molecule type" value="mRNA"/>
</dbReference>
<dbReference type="RefSeq" id="NP_564339.1">
    <property type="nucleotide sequence ID" value="NM_102731.3"/>
</dbReference>
<dbReference type="SMR" id="Q8VZ87"/>
<dbReference type="BioGRID" id="25104">
    <property type="interactions" value="19"/>
</dbReference>
<dbReference type="BioGRID" id="25105">
    <property type="interactions" value="14"/>
</dbReference>
<dbReference type="FunCoup" id="Q8VZ87">
    <property type="interactions" value="22"/>
</dbReference>
<dbReference type="IntAct" id="Q8VZ87">
    <property type="interactions" value="1"/>
</dbReference>
<dbReference type="STRING" id="3702.Q8VZ87"/>
<dbReference type="iPTMnet" id="Q8VZ87"/>
<dbReference type="DNASU" id="839869"/>
<dbReference type="EnsemblPlants" id="AT1G29910.1">
    <property type="protein sequence ID" value="AT1G29910.1"/>
    <property type="gene ID" value="AT1G29910"/>
</dbReference>
<dbReference type="EnsemblPlants" id="AT1G29920.1">
    <property type="protein sequence ID" value="AT1G29920.1"/>
    <property type="gene ID" value="AT1G29920"/>
</dbReference>
<dbReference type="GeneID" id="839869"/>
<dbReference type="Gramene" id="AT1G29910.1">
    <property type="protein sequence ID" value="AT1G29910.1"/>
    <property type="gene ID" value="AT1G29910"/>
</dbReference>
<dbReference type="Gramene" id="AT1G29920.1">
    <property type="protein sequence ID" value="AT1G29920.1"/>
    <property type="gene ID" value="AT1G29920"/>
</dbReference>
<dbReference type="KEGG" id="ath:AT1G29910"/>
<dbReference type="KEGG" id="ath:AT1G29920"/>
<dbReference type="Araport" id="AT1G29910"/>
<dbReference type="TAIR" id="AT1G29910">
    <property type="gene designation" value="CAB3"/>
</dbReference>
<dbReference type="HOGENOM" id="CLU_057943_2_0_1"/>
<dbReference type="InParanoid" id="Q8VZ87"/>
<dbReference type="OMA" id="WFKAAIW"/>
<dbReference type="OrthoDB" id="423598at2759"/>
<dbReference type="PhylomeDB" id="Q8VZ87"/>
<dbReference type="PRO" id="PR:Q8VZ87"/>
<dbReference type="Proteomes" id="UP000006548">
    <property type="component" value="Chromosome 1"/>
</dbReference>
<dbReference type="ExpressionAtlas" id="Q8VZ87">
    <property type="expression patterns" value="baseline and differential"/>
</dbReference>
<dbReference type="GO" id="GO:0009507">
    <property type="term" value="C:chloroplast"/>
    <property type="evidence" value="ECO:0007005"/>
    <property type="project" value="TAIR"/>
</dbReference>
<dbReference type="GO" id="GO:0009534">
    <property type="term" value="C:chloroplast thylakoid"/>
    <property type="evidence" value="ECO:0007005"/>
    <property type="project" value="TAIR"/>
</dbReference>
<dbReference type="GO" id="GO:0009535">
    <property type="term" value="C:chloroplast thylakoid membrane"/>
    <property type="evidence" value="ECO:0007005"/>
    <property type="project" value="TAIR"/>
</dbReference>
<dbReference type="GO" id="GO:0005739">
    <property type="term" value="C:mitochondrion"/>
    <property type="evidence" value="ECO:0007005"/>
    <property type="project" value="TAIR"/>
</dbReference>
<dbReference type="GO" id="GO:0005634">
    <property type="term" value="C:nucleus"/>
    <property type="evidence" value="ECO:0007005"/>
    <property type="project" value="TAIR"/>
</dbReference>
<dbReference type="GO" id="GO:0009522">
    <property type="term" value="C:photosystem I"/>
    <property type="evidence" value="ECO:0007669"/>
    <property type="project" value="UniProtKB-KW"/>
</dbReference>
<dbReference type="GO" id="GO:0009523">
    <property type="term" value="C:photosystem II"/>
    <property type="evidence" value="ECO:0007669"/>
    <property type="project" value="UniProtKB-KW"/>
</dbReference>
<dbReference type="GO" id="GO:0010287">
    <property type="term" value="C:plastoglobule"/>
    <property type="evidence" value="ECO:0007005"/>
    <property type="project" value="TAIR"/>
</dbReference>
<dbReference type="GO" id="GO:0009579">
    <property type="term" value="C:thylakoid"/>
    <property type="evidence" value="ECO:0007005"/>
    <property type="project" value="TAIR"/>
</dbReference>
<dbReference type="GO" id="GO:0016168">
    <property type="term" value="F:chlorophyll binding"/>
    <property type="evidence" value="ECO:0000304"/>
    <property type="project" value="TAIR"/>
</dbReference>
<dbReference type="GO" id="GO:0046872">
    <property type="term" value="F:metal ion binding"/>
    <property type="evidence" value="ECO:0007669"/>
    <property type="project" value="UniProtKB-KW"/>
</dbReference>
<dbReference type="GO" id="GO:0003729">
    <property type="term" value="F:mRNA binding"/>
    <property type="evidence" value="ECO:0000314"/>
    <property type="project" value="TAIR"/>
</dbReference>
<dbReference type="GO" id="GO:0009765">
    <property type="term" value="P:photosynthesis, light harvesting"/>
    <property type="evidence" value="ECO:0007669"/>
    <property type="project" value="InterPro"/>
</dbReference>
<dbReference type="FunFam" id="1.10.3460.10:FF:000001">
    <property type="entry name" value="Chlorophyll a-b binding protein, chloroplastic"/>
    <property type="match status" value="1"/>
</dbReference>
<dbReference type="Gene3D" id="1.10.3460.10">
    <property type="entry name" value="Chlorophyll a/b binding protein domain"/>
    <property type="match status" value="1"/>
</dbReference>
<dbReference type="InterPro" id="IPR001344">
    <property type="entry name" value="Chloro_AB-bd_pln"/>
</dbReference>
<dbReference type="InterPro" id="IPR022796">
    <property type="entry name" value="Chloroa_b-bind"/>
</dbReference>
<dbReference type="PANTHER" id="PTHR21649">
    <property type="entry name" value="CHLOROPHYLL A/B BINDING PROTEIN"/>
    <property type="match status" value="1"/>
</dbReference>
<dbReference type="Pfam" id="PF00504">
    <property type="entry name" value="Chloroa_b-bind"/>
    <property type="match status" value="1"/>
</dbReference>
<dbReference type="SUPFAM" id="SSF103511">
    <property type="entry name" value="Chlorophyll a-b binding protein"/>
    <property type="match status" value="1"/>
</dbReference>
<feature type="transit peptide" description="Chloroplast" evidence="5">
    <location>
        <begin position="1"/>
        <end position="35"/>
    </location>
</feature>
<feature type="chain" id="PRO_0000403938" description="Chlorophyll a-b binding protein 3, chloroplastic">
    <location>
        <begin position="36"/>
        <end position="267"/>
    </location>
</feature>
<feature type="transmembrane region" description="Helical" evidence="4">
    <location>
        <begin position="100"/>
        <end position="120"/>
    </location>
</feature>
<feature type="transmembrane region" description="Helical" evidence="4">
    <location>
        <begin position="152"/>
        <end position="172"/>
    </location>
</feature>
<feature type="transmembrane region" description="Helical" evidence="4">
    <location>
        <begin position="221"/>
        <end position="241"/>
    </location>
</feature>
<feature type="binding site" description="axial binding residue" evidence="3">
    <location>
        <position position="58"/>
    </location>
    <ligand>
        <name>chlorophyll b</name>
        <dbReference type="ChEBI" id="CHEBI:61721"/>
        <label>1</label>
    </ligand>
    <ligandPart>
        <name>Mg</name>
        <dbReference type="ChEBI" id="CHEBI:25107"/>
    </ligandPart>
</feature>
<feature type="binding site" evidence="1">
    <location>
        <position position="80"/>
    </location>
    <ligand>
        <name>chlorophyll a</name>
        <dbReference type="ChEBI" id="CHEBI:58416"/>
        <label>1</label>
    </ligand>
</feature>
<feature type="binding site" evidence="1">
    <location>
        <position position="86"/>
    </location>
    <ligand>
        <name>chlorophyll a</name>
        <dbReference type="ChEBI" id="CHEBI:58416"/>
        <label>1</label>
    </ligand>
</feature>
<feature type="binding site" description="axial binding residue" evidence="3">
    <location>
        <position position="99"/>
    </location>
    <ligand>
        <name>chlorophyll a</name>
        <dbReference type="ChEBI" id="CHEBI:58416"/>
        <label>1</label>
    </ligand>
    <ligandPart>
        <name>Mg</name>
        <dbReference type="ChEBI" id="CHEBI:25107"/>
    </ligandPart>
</feature>
<feature type="binding site" description="axial binding residue" evidence="3">
    <location>
        <position position="102"/>
    </location>
    <ligand>
        <name>chlorophyll a</name>
        <dbReference type="ChEBI" id="CHEBI:58416"/>
        <label>2</label>
    </ligand>
    <ligandPart>
        <name>Mg</name>
        <dbReference type="ChEBI" id="CHEBI:25107"/>
    </ligandPart>
</feature>
<feature type="binding site" evidence="1">
    <location>
        <position position="104"/>
    </location>
    <ligand>
        <name>chlorophyll b</name>
        <dbReference type="ChEBI" id="CHEBI:61721"/>
        <label>2</label>
    </ligand>
</feature>
<feature type="binding site" evidence="1">
    <location>
        <position position="137"/>
    </location>
    <ligand>
        <name>chlorophyll a</name>
        <dbReference type="ChEBI" id="CHEBI:58416"/>
        <label>3</label>
    </ligand>
</feature>
<feature type="binding site" evidence="1">
    <location>
        <position position="147"/>
    </location>
    <ligand>
        <name>chlorophyll a</name>
        <dbReference type="ChEBI" id="CHEBI:58416"/>
        <label>3</label>
    </ligand>
</feature>
<feature type="binding site" description="axial binding residue" evidence="3">
    <location>
        <position position="153"/>
    </location>
    <ligand>
        <name>chlorophyll b</name>
        <dbReference type="ChEBI" id="CHEBI:61721"/>
        <label>2</label>
    </ligand>
    <ligandPart>
        <name>Mg</name>
        <dbReference type="ChEBI" id="CHEBI:25107"/>
    </ligandPart>
</feature>
<feature type="binding site" evidence="1">
    <location>
        <position position="157"/>
    </location>
    <ligand>
        <name>chlorophyll b</name>
        <dbReference type="ChEBI" id="CHEBI:61721"/>
        <label>3</label>
    </ligand>
</feature>
<feature type="binding site" evidence="1">
    <location>
        <position position="165"/>
    </location>
    <ligand>
        <name>chlorophyll b</name>
        <dbReference type="ChEBI" id="CHEBI:61721"/>
        <label>4</label>
    </ligand>
</feature>
<feature type="binding site" evidence="2">
    <location>
        <position position="165"/>
    </location>
    <ligand>
        <name>chlorophyll b</name>
        <dbReference type="ChEBI" id="CHEBI:61721"/>
        <label>5</label>
    </ligand>
</feature>
<feature type="binding site" description="axial binding residue" evidence="3">
    <location>
        <position position="173"/>
    </location>
    <ligand>
        <name>chlorophyll b</name>
        <dbReference type="ChEBI" id="CHEBI:61721"/>
        <label>3</label>
    </ligand>
    <ligandPart>
        <name>Mg</name>
        <dbReference type="ChEBI" id="CHEBI:25107"/>
    </ligandPart>
</feature>
<feature type="binding site" evidence="1">
    <location>
        <position position="176"/>
    </location>
    <ligand>
        <name>chlorophyll b</name>
        <dbReference type="ChEBI" id="CHEBI:61721"/>
        <label>4</label>
    </ligand>
</feature>
<feature type="binding site" evidence="1">
    <location>
        <position position="183"/>
    </location>
    <ligand>
        <name>chlorophyll b</name>
        <dbReference type="ChEBI" id="CHEBI:61721"/>
        <label>2</label>
    </ligand>
</feature>
<feature type="binding site" evidence="1">
    <location>
        <position position="214"/>
    </location>
    <ligand>
        <name>chlorophyll a</name>
        <dbReference type="ChEBI" id="CHEBI:58416"/>
        <label>5</label>
    </ligand>
</feature>
<feature type="binding site" description="axial binding residue" evidence="3">
    <location>
        <position position="215"/>
    </location>
    <ligand>
        <name>chlorophyll a</name>
        <dbReference type="ChEBI" id="CHEBI:58416"/>
        <label>3</label>
    </ligand>
    <ligandPart>
        <name>Mg</name>
        <dbReference type="ChEBI" id="CHEBI:25107"/>
    </ligandPart>
</feature>
<feature type="binding site" description="axial binding residue" evidence="3">
    <location>
        <position position="218"/>
    </location>
    <ligand>
        <name>chlorophyll a</name>
        <dbReference type="ChEBI" id="CHEBI:58416"/>
        <label>4</label>
    </ligand>
    <ligandPart>
        <name>Mg</name>
        <dbReference type="ChEBI" id="CHEBI:25107"/>
    </ligandPart>
</feature>
<feature type="binding site" evidence="1">
    <location>
        <position position="220"/>
    </location>
    <ligand>
        <name>chlorophyll a</name>
        <dbReference type="ChEBI" id="CHEBI:58416"/>
        <label>1</label>
    </ligand>
</feature>
<feature type="binding site" description="axial binding residue" evidence="3">
    <location>
        <position position="232"/>
    </location>
    <ligand>
        <name>chlorophyll a</name>
        <dbReference type="ChEBI" id="CHEBI:58416"/>
        <label>5</label>
    </ligand>
    <ligandPart>
        <name>Mg</name>
        <dbReference type="ChEBI" id="CHEBI:25107"/>
    </ligandPart>
</feature>
<feature type="binding site" description="axial binding residue" evidence="3">
    <location>
        <position position="247"/>
    </location>
    <ligand>
        <name>chlorophyll a</name>
        <dbReference type="ChEBI" id="CHEBI:58416"/>
        <label>6</label>
    </ligand>
    <ligandPart>
        <name>Mg</name>
        <dbReference type="ChEBI" id="CHEBI:25107"/>
    </ligandPart>
</feature>
<feature type="binding site" evidence="1">
    <location>
        <position position="256"/>
    </location>
    <ligand>
        <name>chlorophyll a</name>
        <dbReference type="ChEBI" id="CHEBI:58416"/>
        <label>6</label>
    </ligand>
</feature>
<feature type="binding site" evidence="1">
    <location>
        <position position="263"/>
    </location>
    <ligand>
        <name>chlorophyll b</name>
        <dbReference type="ChEBI" id="CHEBI:61721"/>
        <label>5</label>
    </ligand>
</feature>
<feature type="modified residue" description="N2-acetylarginine" evidence="5">
    <location>
        <position position="36"/>
    </location>
</feature>
<feature type="modified residue" description="Phosphothreonine" evidence="5">
    <location>
        <position position="38"/>
    </location>
</feature>
<feature type="sequence conflict" description="In Ref. 4; AAM47913/AAL38341." evidence="6" ref="4">
    <original>G</original>
    <variation>E</variation>
    <location>
        <position position="181"/>
    </location>
</feature>
<sequence length="267" mass="28227">MAASTMALSSPAFAGKAVNLSPAASEVLGSGRVTMRKTVAKPKGPSGSPWYGSDRVKYLGPFSGESPSYLTGEFPGDYGWDTAGLSADPETFARNRELEVIHSRWAMLGALGCVFPELLARNGVKFGEAVWFKAGSQIFSDGGLDYLGNPSLVHAQSILAIWATQVILMGAVEGYRVAGNGPLGEAEDLLYPGGSFDPLGLATDPEAFAELKVKELKNGRLAMFSMFGFFVQAIVTGKGPIENLADHLADPVNNNAWAFATNFVPGK</sequence>
<name>CB1B_ARATH</name>
<accession>Q8VZ87</accession>
<accession>P04777</accession>
<accession>P83754</accession>
<organism>
    <name type="scientific">Arabidopsis thaliana</name>
    <name type="common">Mouse-ear cress</name>
    <dbReference type="NCBI Taxonomy" id="3702"/>
    <lineage>
        <taxon>Eukaryota</taxon>
        <taxon>Viridiplantae</taxon>
        <taxon>Streptophyta</taxon>
        <taxon>Embryophyta</taxon>
        <taxon>Tracheophyta</taxon>
        <taxon>Spermatophyta</taxon>
        <taxon>Magnoliopsida</taxon>
        <taxon>eudicotyledons</taxon>
        <taxon>Gunneridae</taxon>
        <taxon>Pentapetalae</taxon>
        <taxon>rosids</taxon>
        <taxon>malvids</taxon>
        <taxon>Brassicales</taxon>
        <taxon>Brassicaceae</taxon>
        <taxon>Camelineae</taxon>
        <taxon>Arabidopsis</taxon>
    </lineage>
</organism>
<protein>
    <recommendedName>
        <fullName>Chlorophyll a-b binding protein 3, chloroplastic</fullName>
    </recommendedName>
    <alternativeName>
        <fullName>Chlorophyll a-b protein 180</fullName>
        <shortName>CAB-180</shortName>
    </alternativeName>
    <alternativeName>
        <fullName>LHCII type I CAB-3</fullName>
    </alternativeName>
</protein>
<evidence type="ECO:0000250" key="1"/>
<evidence type="ECO:0000250" key="2">
    <source>
        <dbReference type="UniProtKB" id="P07371"/>
    </source>
</evidence>
<evidence type="ECO:0000250" key="3">
    <source>
        <dbReference type="UniProtKB" id="P12333"/>
    </source>
</evidence>
<evidence type="ECO:0000255" key="4"/>
<evidence type="ECO:0000269" key="5">
    <source>
    </source>
</evidence>
<evidence type="ECO:0000305" key="6"/>
<keyword id="KW-0007">Acetylation</keyword>
<keyword id="KW-0148">Chlorophyll</keyword>
<keyword id="KW-0150">Chloroplast</keyword>
<keyword id="KW-0157">Chromophore</keyword>
<keyword id="KW-0903">Direct protein sequencing</keyword>
<keyword id="KW-0460">Magnesium</keyword>
<keyword id="KW-0472">Membrane</keyword>
<keyword id="KW-0479">Metal-binding</keyword>
<keyword id="KW-0597">Phosphoprotein</keyword>
<keyword id="KW-0602">Photosynthesis</keyword>
<keyword id="KW-0603">Photosystem I</keyword>
<keyword id="KW-0604">Photosystem II</keyword>
<keyword id="KW-0934">Plastid</keyword>
<keyword id="KW-1185">Reference proteome</keyword>
<keyword id="KW-0793">Thylakoid</keyword>
<keyword id="KW-0809">Transit peptide</keyword>
<keyword id="KW-0812">Transmembrane</keyword>
<keyword id="KW-1133">Transmembrane helix</keyword>
<proteinExistence type="evidence at protein level"/>